<feature type="chain" id="PRO_0000194311" description="Uncharacterized protein SCO0757">
    <location>
        <begin position="1"/>
        <end position="336"/>
    </location>
</feature>
<gene>
    <name type="ordered locus">SCO0757</name>
    <name type="ORF">SCF81.16</name>
</gene>
<keyword id="KW-0378">Hydrolase</keyword>
<keyword id="KW-1185">Reference proteome</keyword>
<reference key="1">
    <citation type="journal article" date="2002" name="Nature">
        <title>Complete genome sequence of the model actinomycete Streptomyces coelicolor A3(2).</title>
        <authorList>
            <person name="Bentley S.D."/>
            <person name="Chater K.F."/>
            <person name="Cerdeno-Tarraga A.-M."/>
            <person name="Challis G.L."/>
            <person name="Thomson N.R."/>
            <person name="James K.D."/>
            <person name="Harris D.E."/>
            <person name="Quail M.A."/>
            <person name="Kieser H."/>
            <person name="Harper D."/>
            <person name="Bateman A."/>
            <person name="Brown S."/>
            <person name="Chandra G."/>
            <person name="Chen C.W."/>
            <person name="Collins M."/>
            <person name="Cronin A."/>
            <person name="Fraser A."/>
            <person name="Goble A."/>
            <person name="Hidalgo J."/>
            <person name="Hornsby T."/>
            <person name="Howarth S."/>
            <person name="Huang C.-H."/>
            <person name="Kieser T."/>
            <person name="Larke L."/>
            <person name="Murphy L.D."/>
            <person name="Oliver K."/>
            <person name="O'Neil S."/>
            <person name="Rabbinowitsch E."/>
            <person name="Rajandream M.A."/>
            <person name="Rutherford K.M."/>
            <person name="Rutter S."/>
            <person name="Seeger K."/>
            <person name="Saunders D."/>
            <person name="Sharp S."/>
            <person name="Squares R."/>
            <person name="Squares S."/>
            <person name="Taylor K."/>
            <person name="Warren T."/>
            <person name="Wietzorrek A."/>
            <person name="Woodward J.R."/>
            <person name="Barrell B.G."/>
            <person name="Parkhill J."/>
            <person name="Hopwood D.A."/>
        </authorList>
    </citation>
    <scope>NUCLEOTIDE SEQUENCE [LARGE SCALE GENOMIC DNA]</scope>
    <source>
        <strain>ATCC BAA-471 / A3(2) / M145</strain>
    </source>
</reference>
<accession>Q9RJD5</accession>
<comment type="similarity">
    <text evidence="1">Belongs to the GppA/Ppx family.</text>
</comment>
<evidence type="ECO:0000305" key="1"/>
<dbReference type="EMBL" id="AL939106">
    <property type="protein sequence ID" value="CAB61547.1"/>
    <property type="molecule type" value="Genomic_DNA"/>
</dbReference>
<dbReference type="RefSeq" id="NP_625060.1">
    <property type="nucleotide sequence ID" value="NC_003888.3"/>
</dbReference>
<dbReference type="RefSeq" id="WP_011027335.1">
    <property type="nucleotide sequence ID" value="NZ_VNID01000004.1"/>
</dbReference>
<dbReference type="SMR" id="Q9RJD5"/>
<dbReference type="STRING" id="100226.gene:17758340"/>
<dbReference type="PaxDb" id="100226-SCO0757"/>
<dbReference type="KEGG" id="sco:SCO0757"/>
<dbReference type="PATRIC" id="fig|100226.15.peg.748"/>
<dbReference type="eggNOG" id="COG0248">
    <property type="taxonomic scope" value="Bacteria"/>
</dbReference>
<dbReference type="HOGENOM" id="CLU_025908_1_4_11"/>
<dbReference type="InParanoid" id="Q9RJD5"/>
<dbReference type="OrthoDB" id="9793035at2"/>
<dbReference type="PhylomeDB" id="Q9RJD5"/>
<dbReference type="Proteomes" id="UP000001973">
    <property type="component" value="Chromosome"/>
</dbReference>
<dbReference type="GO" id="GO:0016462">
    <property type="term" value="F:pyrophosphatase activity"/>
    <property type="evidence" value="ECO:0000318"/>
    <property type="project" value="GO_Central"/>
</dbReference>
<dbReference type="CDD" id="cd24056">
    <property type="entry name" value="ASKHA_NBD_MtPPX1-like"/>
    <property type="match status" value="1"/>
</dbReference>
<dbReference type="FunFam" id="3.30.420.150:FF:000006">
    <property type="entry name" value="Ppx/GppA family phosphatase"/>
    <property type="match status" value="1"/>
</dbReference>
<dbReference type="Gene3D" id="3.30.420.40">
    <property type="match status" value="1"/>
</dbReference>
<dbReference type="Gene3D" id="3.30.420.150">
    <property type="entry name" value="Exopolyphosphatase. Domain 2"/>
    <property type="match status" value="1"/>
</dbReference>
<dbReference type="InterPro" id="IPR043129">
    <property type="entry name" value="ATPase_NBD"/>
</dbReference>
<dbReference type="InterPro" id="IPR050273">
    <property type="entry name" value="GppA/Ppx_hydrolase"/>
</dbReference>
<dbReference type="InterPro" id="IPR003695">
    <property type="entry name" value="Ppx_GppA_N"/>
</dbReference>
<dbReference type="PANTHER" id="PTHR30005">
    <property type="entry name" value="EXOPOLYPHOSPHATASE"/>
    <property type="match status" value="1"/>
</dbReference>
<dbReference type="PANTHER" id="PTHR30005:SF0">
    <property type="entry name" value="RETROGRADE REGULATION PROTEIN 2"/>
    <property type="match status" value="1"/>
</dbReference>
<dbReference type="Pfam" id="PF02541">
    <property type="entry name" value="Ppx-GppA"/>
    <property type="match status" value="1"/>
</dbReference>
<dbReference type="SUPFAM" id="SSF53067">
    <property type="entry name" value="Actin-like ATPase domain"/>
    <property type="match status" value="2"/>
</dbReference>
<name>Y757_STRCO</name>
<organism>
    <name type="scientific">Streptomyces coelicolor (strain ATCC BAA-471 / A3(2) / M145)</name>
    <dbReference type="NCBI Taxonomy" id="100226"/>
    <lineage>
        <taxon>Bacteria</taxon>
        <taxon>Bacillati</taxon>
        <taxon>Actinomycetota</taxon>
        <taxon>Actinomycetes</taxon>
        <taxon>Kitasatosporales</taxon>
        <taxon>Streptomycetaceae</taxon>
        <taxon>Streptomyces</taxon>
        <taxon>Streptomyces albidoflavus group</taxon>
    </lineage>
</organism>
<proteinExistence type="inferred from homology"/>
<sequence length="336" mass="35815">MRTSVVDVGSNTVRLMVADAEGGVPLPVHTAKWRLRLSEQVRPGDPVPEEAVERLVGAVADASRTADRWGASGPLAFATAVVRAAPNRREVLRTVQARTGVPLCTLPGEVEAELTFLAARRWMGWRSGPLALLDIGGGSLEVAFGRGRLPGFVASLPLGAARLTHEFLAGGRDPASPEQVKALRRRVRHQLRDAAARIRWEGPRTAVATSRTFQQLGRLCGAPPGRYGPFTERRMRCSDLGDAVGRLAALSAAERARLPGISAPRAAQSLAGAVVGHTAMKLTGLEAVALCPWAIREGVLLRHIEDGPAWWAEVVRRSDEAAPPAPVPLRLASASN</sequence>
<protein>
    <recommendedName>
        <fullName>Uncharacterized protein SCO0757</fullName>
    </recommendedName>
</protein>